<gene>
    <name evidence="4" type="primary">CYP76AH3</name>
</gene>
<protein>
    <recommendedName>
        <fullName evidence="5">Sugiol synthase</fullName>
        <ecNumber evidence="3">1.14.14.65</ecNumber>
    </recommendedName>
    <alternativeName>
        <fullName evidence="4">Cytochrome P450 76AH3</fullName>
    </alternativeName>
    <alternativeName>
        <fullName evidence="5">Ferruginol monooxygenase</fullName>
        <ecNumber evidence="3">1.14.14.60</ecNumber>
    </alternativeName>
</protein>
<comment type="function">
    <text evidence="3">Monooxygenase that oxidizes ferruginol to produce sugiol (PubMed:26682704). Oxidizes ferruginol at C-12 to produce 11-hydroxyferruginol (PubMed:26682704). Can oxidize 11-hydroxyferruginol to 11-hydroxysugiol (PubMed:26682704). These products are intermediates in tanshinone biosynthesis (PubMed:26682704).</text>
</comment>
<comment type="catalytic activity">
    <reaction evidence="3">
        <text>ferruginol + 2 reduced [NADPH--hemoprotein reductase] + 2 O2 = sugiol + 2 oxidized [NADPH--hemoprotein reductase] + 3 H2O + 2 H(+)</text>
        <dbReference type="Rhea" id="RHEA:55456"/>
        <dbReference type="Rhea" id="RHEA-COMP:11964"/>
        <dbReference type="Rhea" id="RHEA-COMP:11965"/>
        <dbReference type="ChEBI" id="CHEBI:15377"/>
        <dbReference type="ChEBI" id="CHEBI:15378"/>
        <dbReference type="ChEBI" id="CHEBI:15379"/>
        <dbReference type="ChEBI" id="CHEBI:57618"/>
        <dbReference type="ChEBI" id="CHEBI:58210"/>
        <dbReference type="ChEBI" id="CHEBI:78274"/>
        <dbReference type="ChEBI" id="CHEBI:138961"/>
        <dbReference type="EC" id="1.14.14.65"/>
    </reaction>
    <physiologicalReaction direction="left-to-right" evidence="3">
        <dbReference type="Rhea" id="RHEA:55457"/>
    </physiologicalReaction>
</comment>
<comment type="catalytic activity">
    <reaction evidence="3">
        <text>ferruginol + reduced [NADPH--hemoprotein reductase] + O2 = 11-hydroxyferruginol + oxidized [NADPH--hemoprotein reductase] + H2O + H(+)</text>
        <dbReference type="Rhea" id="RHEA:55428"/>
        <dbReference type="Rhea" id="RHEA-COMP:11964"/>
        <dbReference type="Rhea" id="RHEA-COMP:11965"/>
        <dbReference type="ChEBI" id="CHEBI:15377"/>
        <dbReference type="ChEBI" id="CHEBI:15378"/>
        <dbReference type="ChEBI" id="CHEBI:15379"/>
        <dbReference type="ChEBI" id="CHEBI:57618"/>
        <dbReference type="ChEBI" id="CHEBI:58210"/>
        <dbReference type="ChEBI" id="CHEBI:78274"/>
        <dbReference type="ChEBI" id="CHEBI:138942"/>
        <dbReference type="EC" id="1.14.14.60"/>
    </reaction>
    <physiologicalReaction direction="left-to-right" evidence="3">
        <dbReference type="Rhea" id="RHEA:55429"/>
    </physiologicalReaction>
</comment>
<comment type="catalytic activity">
    <reaction evidence="3">
        <text>11-hydroxyferruginol + 2 reduced [NADPH--hemoprotein reductase] + 2 O2 = 11-hydroxysugiol + 2 oxidized [NADPH--hemoprotein reductase] + 3 H2O + 2 H(+)</text>
        <dbReference type="Rhea" id="RHEA:55460"/>
        <dbReference type="Rhea" id="RHEA-COMP:11964"/>
        <dbReference type="Rhea" id="RHEA-COMP:11965"/>
        <dbReference type="ChEBI" id="CHEBI:15377"/>
        <dbReference type="ChEBI" id="CHEBI:15378"/>
        <dbReference type="ChEBI" id="CHEBI:15379"/>
        <dbReference type="ChEBI" id="CHEBI:57618"/>
        <dbReference type="ChEBI" id="CHEBI:58210"/>
        <dbReference type="ChEBI" id="CHEBI:138942"/>
        <dbReference type="ChEBI" id="CHEBI:138962"/>
        <dbReference type="EC" id="1.14.14.65"/>
    </reaction>
    <physiologicalReaction direction="left-to-right" evidence="3">
        <dbReference type="Rhea" id="RHEA:55461"/>
    </physiologicalReaction>
</comment>
<comment type="cofactor">
    <cofactor evidence="1">
        <name>heme</name>
        <dbReference type="ChEBI" id="CHEBI:30413"/>
    </cofactor>
</comment>
<comment type="pathway">
    <text evidence="5">Secondary metabolite biosynthesis; terpenoid biosynthesis.</text>
</comment>
<comment type="subcellular location">
    <subcellularLocation>
        <location evidence="2">Membrane</location>
        <topology evidence="2">Single-pass membrane protein</topology>
    </subcellularLocation>
</comment>
<comment type="tissue specificity">
    <text evidence="3">Expressed in roots.</text>
</comment>
<comment type="similarity">
    <text evidence="5">Belongs to the cytochrome P450 family.</text>
</comment>
<name>C76H3_SALMI</name>
<feature type="chain" id="PRO_0000452246" description="Sugiol synthase">
    <location>
        <begin position="1"/>
        <end position="494"/>
    </location>
</feature>
<feature type="transmembrane region" description="Helical" evidence="2">
    <location>
        <begin position="3"/>
        <end position="23"/>
    </location>
</feature>
<feature type="binding site" description="axial binding residue" evidence="1">
    <location>
        <position position="437"/>
    </location>
    <ligand>
        <name>heme</name>
        <dbReference type="ChEBI" id="CHEBI:30413"/>
    </ligand>
    <ligandPart>
        <name>Fe</name>
        <dbReference type="ChEBI" id="CHEBI:18248"/>
    </ligandPart>
</feature>
<dbReference type="EC" id="1.14.14.65" evidence="3"/>
<dbReference type="EC" id="1.14.14.60" evidence="3"/>
<dbReference type="EMBL" id="KR140168">
    <property type="protein sequence ID" value="AMB36496.1"/>
    <property type="molecule type" value="mRNA"/>
</dbReference>
<dbReference type="PDB" id="7X2Q">
    <property type="method" value="X-ray"/>
    <property type="resolution" value="3.68 A"/>
    <property type="chains" value="A/B=28-493"/>
</dbReference>
<dbReference type="PDBsum" id="7X2Q"/>
<dbReference type="SMR" id="A0A0Y0GRS3"/>
<dbReference type="KEGG" id="ag:AMB36496"/>
<dbReference type="BRENDA" id="1.14.14.60">
    <property type="organism ID" value="9850"/>
</dbReference>
<dbReference type="BRENDA" id="1.14.14.65">
    <property type="organism ID" value="9850"/>
</dbReference>
<dbReference type="UniPathway" id="UPA00213"/>
<dbReference type="GO" id="GO:0016020">
    <property type="term" value="C:membrane"/>
    <property type="evidence" value="ECO:0007669"/>
    <property type="project" value="UniProtKB-SubCell"/>
</dbReference>
<dbReference type="GO" id="GO:0020037">
    <property type="term" value="F:heme binding"/>
    <property type="evidence" value="ECO:0007669"/>
    <property type="project" value="InterPro"/>
</dbReference>
<dbReference type="GO" id="GO:0005506">
    <property type="term" value="F:iron ion binding"/>
    <property type="evidence" value="ECO:0007669"/>
    <property type="project" value="InterPro"/>
</dbReference>
<dbReference type="GO" id="GO:0016712">
    <property type="term" value="F:oxidoreductase activity, acting on paired donors, with incorporation or reduction of molecular oxygen, reduced flavin or flavoprotein as one donor, and incorporation of one atom of oxygen"/>
    <property type="evidence" value="ECO:0000314"/>
    <property type="project" value="UniProtKB"/>
</dbReference>
<dbReference type="GO" id="GO:0016114">
    <property type="term" value="P:terpenoid biosynthetic process"/>
    <property type="evidence" value="ECO:0000314"/>
    <property type="project" value="UniProtKB"/>
</dbReference>
<dbReference type="CDD" id="cd11073">
    <property type="entry name" value="CYP76-like"/>
    <property type="match status" value="1"/>
</dbReference>
<dbReference type="FunFam" id="1.10.630.10:FF:000007">
    <property type="entry name" value="Cytochrome P450 76C4"/>
    <property type="match status" value="1"/>
</dbReference>
<dbReference type="Gene3D" id="1.10.630.10">
    <property type="entry name" value="Cytochrome P450"/>
    <property type="match status" value="1"/>
</dbReference>
<dbReference type="InterPro" id="IPR001128">
    <property type="entry name" value="Cyt_P450"/>
</dbReference>
<dbReference type="InterPro" id="IPR017972">
    <property type="entry name" value="Cyt_P450_CS"/>
</dbReference>
<dbReference type="InterPro" id="IPR002401">
    <property type="entry name" value="Cyt_P450_E_grp-I"/>
</dbReference>
<dbReference type="InterPro" id="IPR036396">
    <property type="entry name" value="Cyt_P450_sf"/>
</dbReference>
<dbReference type="PANTHER" id="PTHR47950">
    <property type="entry name" value="CYTOCHROME P450, FAMILY 76, SUBFAMILY C, POLYPEPTIDE 5-RELATED"/>
    <property type="match status" value="1"/>
</dbReference>
<dbReference type="PANTHER" id="PTHR47950:SF4">
    <property type="entry name" value="GERANIOL 8-HYDROXYLASE-LIKE"/>
    <property type="match status" value="1"/>
</dbReference>
<dbReference type="Pfam" id="PF00067">
    <property type="entry name" value="p450"/>
    <property type="match status" value="1"/>
</dbReference>
<dbReference type="PRINTS" id="PR00463">
    <property type="entry name" value="EP450I"/>
</dbReference>
<dbReference type="PRINTS" id="PR00385">
    <property type="entry name" value="P450"/>
</dbReference>
<dbReference type="SUPFAM" id="SSF48264">
    <property type="entry name" value="Cytochrome P450"/>
    <property type="match status" value="1"/>
</dbReference>
<dbReference type="PROSITE" id="PS00086">
    <property type="entry name" value="CYTOCHROME_P450"/>
    <property type="match status" value="1"/>
</dbReference>
<keyword id="KW-0002">3D-structure</keyword>
<keyword id="KW-0349">Heme</keyword>
<keyword id="KW-0408">Iron</keyword>
<keyword id="KW-0472">Membrane</keyword>
<keyword id="KW-0479">Metal-binding</keyword>
<keyword id="KW-0503">Monooxygenase</keyword>
<keyword id="KW-0560">Oxidoreductase</keyword>
<keyword id="KW-0812">Transmembrane</keyword>
<keyword id="KW-1133">Transmembrane helix</keyword>
<evidence type="ECO:0000250" key="1">
    <source>
        <dbReference type="UniProtKB" id="Q94IP1"/>
    </source>
</evidence>
<evidence type="ECO:0000255" key="2"/>
<evidence type="ECO:0000269" key="3">
    <source>
    </source>
</evidence>
<evidence type="ECO:0000303" key="4">
    <source>
    </source>
</evidence>
<evidence type="ECO:0000305" key="5"/>
<proteinExistence type="evidence at protein level"/>
<organism>
    <name type="scientific">Salvia miltiorrhiza</name>
    <name type="common">Chinese sage</name>
    <dbReference type="NCBI Taxonomy" id="226208"/>
    <lineage>
        <taxon>Eukaryota</taxon>
        <taxon>Viridiplantae</taxon>
        <taxon>Streptophyta</taxon>
        <taxon>Embryophyta</taxon>
        <taxon>Tracheophyta</taxon>
        <taxon>Spermatophyta</taxon>
        <taxon>Magnoliopsida</taxon>
        <taxon>eudicotyledons</taxon>
        <taxon>Gunneridae</taxon>
        <taxon>Pentapetalae</taxon>
        <taxon>asterids</taxon>
        <taxon>lamiids</taxon>
        <taxon>Lamiales</taxon>
        <taxon>Lamiaceae</taxon>
        <taxon>Nepetoideae</taxon>
        <taxon>Mentheae</taxon>
        <taxon>Salviinae</taxon>
        <taxon>Salvia</taxon>
        <taxon>Salvia incertae sedis</taxon>
    </lineage>
</organism>
<reference key="1">
    <citation type="journal article" date="2016" name="New Phytol.">
        <title>Cytochrome P450 promiscuity leads to a bifurcating biosynthetic pathway for tanshinones.</title>
        <authorList>
            <person name="Guo J."/>
            <person name="Ma X."/>
            <person name="Cai Y."/>
            <person name="Ma Y."/>
            <person name="Zhan Z."/>
            <person name="Zhou Y.J."/>
            <person name="Liu W."/>
            <person name="Guan M."/>
            <person name="Yang J."/>
            <person name="Cui G."/>
            <person name="Kang L."/>
            <person name="Yang L."/>
            <person name="Shen Y."/>
            <person name="Tang J."/>
            <person name="Lin H."/>
            <person name="Ma X."/>
            <person name="Jin B."/>
            <person name="Liu Z."/>
            <person name="Peters R.J."/>
            <person name="Zhao Z.K."/>
            <person name="Huang L."/>
        </authorList>
    </citation>
    <scope>NUCLEOTIDE SEQUENCE [MRNA]</scope>
    <scope>FUNCTION</scope>
    <scope>CATALYTIC ACTIVITY</scope>
    <scope>TISSUE SPECIFICITY</scope>
</reference>
<sequence length="494" mass="55757">MDSFSLLAALFFISAATWFISSRRRRNLPPGPFPYPIVGNMLQLGAQPHETFAKLSKKYGPLMSVHLGSLYTVIVSSPEMAKEIMLKYGTVFSGRTVAQAVHACDHDKISMGFLPIGAEWRDMRKICKEQMFSHQSMEDSQGLRKQKLQQLLDHAHRCSEQGRAIDIREAAFITTLNLMSATLFSMQATEFDSKVTMEFKEIIEGVASIVGVPNFADYFPILRPFDPQGVKRRADVYFGRLLALIEGYLNDRIQSRKANPDAPKKDDFLETLVDILNSNDNKLKTDHLLHLMLDLFVGGSETSTTEIEWIMEELVAHPDKMAKVKAELKSVMGDEKVVDESLMPRLPYLQAVVKESMRLHPPGPLLLPRKAESDQVVNGYLIPKGTQVLINAWAMGRDSTIWNNPDAFQPERFLDNKIDFKGQDYELIPFGSGRRVCPGMPLANRMLHTVTATLVHNFDWKLERPDAPLAEHQGVLFGFAVRRAVPLRIVPYKA</sequence>
<accession>A0A0Y0GRS3</accession>